<geneLocation type="chloroplast"/>
<name>RR13_GUITH</name>
<gene>
    <name evidence="1" type="primary">rps13</name>
</gene>
<accession>O46912</accession>
<evidence type="ECO:0000255" key="1">
    <source>
        <dbReference type="HAMAP-Rule" id="MF_01315"/>
    </source>
</evidence>
<evidence type="ECO:0000256" key="2">
    <source>
        <dbReference type="SAM" id="MobiDB-lite"/>
    </source>
</evidence>
<evidence type="ECO:0000305" key="3"/>
<keyword id="KW-0150">Chloroplast</keyword>
<keyword id="KW-0934">Plastid</keyword>
<keyword id="KW-0687">Ribonucleoprotein</keyword>
<keyword id="KW-0689">Ribosomal protein</keyword>
<keyword id="KW-0694">RNA-binding</keyword>
<keyword id="KW-0699">rRNA-binding</keyword>
<feature type="chain" id="PRO_0000132199" description="Small ribosomal subunit protein uS13c">
    <location>
        <begin position="1"/>
        <end position="122"/>
    </location>
</feature>
<feature type="region of interest" description="Disordered" evidence="2">
    <location>
        <begin position="102"/>
        <end position="122"/>
    </location>
</feature>
<proteinExistence type="inferred from homology"/>
<comment type="function">
    <text evidence="1">Located at the top of the head of the 30S subunit, it contacts several helices of the 16S rRNA.</text>
</comment>
<comment type="subunit">
    <text>Part of the 30S ribosomal subunit.</text>
</comment>
<comment type="subcellular location">
    <subcellularLocation>
        <location>Plastid</location>
        <location>Chloroplast</location>
    </subcellularLocation>
</comment>
<comment type="similarity">
    <text evidence="1">Belongs to the universal ribosomal protein uS13 family.</text>
</comment>
<organism>
    <name type="scientific">Guillardia theta</name>
    <name type="common">Cryptophyte</name>
    <name type="synonym">Cryptomonas phi</name>
    <dbReference type="NCBI Taxonomy" id="55529"/>
    <lineage>
        <taxon>Eukaryota</taxon>
        <taxon>Cryptophyceae</taxon>
        <taxon>Pyrenomonadales</taxon>
        <taxon>Geminigeraceae</taxon>
        <taxon>Guillardia</taxon>
    </lineage>
</organism>
<protein>
    <recommendedName>
        <fullName evidence="1">Small ribosomal subunit protein uS13c</fullName>
    </recommendedName>
    <alternativeName>
        <fullName evidence="3">30S ribosomal protein S13, chloroplastic</fullName>
    </alternativeName>
</protein>
<dbReference type="EMBL" id="AF041468">
    <property type="protein sequence ID" value="AAC35722.1"/>
    <property type="molecule type" value="Genomic_DNA"/>
</dbReference>
<dbReference type="RefSeq" id="NP_050788.1">
    <property type="nucleotide sequence ID" value="NC_000926.1"/>
</dbReference>
<dbReference type="SMR" id="O46912"/>
<dbReference type="GeneID" id="857096"/>
<dbReference type="HOGENOM" id="CLU_103849_1_2_1"/>
<dbReference type="OMA" id="MNVKRLM"/>
<dbReference type="GO" id="GO:0009507">
    <property type="term" value="C:chloroplast"/>
    <property type="evidence" value="ECO:0007669"/>
    <property type="project" value="UniProtKB-SubCell"/>
</dbReference>
<dbReference type="GO" id="GO:0005829">
    <property type="term" value="C:cytosol"/>
    <property type="evidence" value="ECO:0007669"/>
    <property type="project" value="TreeGrafter"/>
</dbReference>
<dbReference type="GO" id="GO:0015935">
    <property type="term" value="C:small ribosomal subunit"/>
    <property type="evidence" value="ECO:0007669"/>
    <property type="project" value="TreeGrafter"/>
</dbReference>
<dbReference type="GO" id="GO:0019843">
    <property type="term" value="F:rRNA binding"/>
    <property type="evidence" value="ECO:0007669"/>
    <property type="project" value="UniProtKB-UniRule"/>
</dbReference>
<dbReference type="GO" id="GO:0003735">
    <property type="term" value="F:structural constituent of ribosome"/>
    <property type="evidence" value="ECO:0007669"/>
    <property type="project" value="InterPro"/>
</dbReference>
<dbReference type="GO" id="GO:0006412">
    <property type="term" value="P:translation"/>
    <property type="evidence" value="ECO:0007669"/>
    <property type="project" value="UniProtKB-UniRule"/>
</dbReference>
<dbReference type="FunFam" id="1.10.8.50:FF:000001">
    <property type="entry name" value="30S ribosomal protein S13"/>
    <property type="match status" value="1"/>
</dbReference>
<dbReference type="FunFam" id="4.10.910.10:FF:000001">
    <property type="entry name" value="30S ribosomal protein S13"/>
    <property type="match status" value="1"/>
</dbReference>
<dbReference type="Gene3D" id="1.10.8.50">
    <property type="match status" value="1"/>
</dbReference>
<dbReference type="Gene3D" id="4.10.910.10">
    <property type="entry name" value="30s ribosomal protein s13, domain 2"/>
    <property type="match status" value="1"/>
</dbReference>
<dbReference type="HAMAP" id="MF_01315">
    <property type="entry name" value="Ribosomal_uS13"/>
    <property type="match status" value="1"/>
</dbReference>
<dbReference type="InterPro" id="IPR027437">
    <property type="entry name" value="Rbsml_uS13_C"/>
</dbReference>
<dbReference type="InterPro" id="IPR001892">
    <property type="entry name" value="Ribosomal_uS13"/>
</dbReference>
<dbReference type="InterPro" id="IPR010979">
    <property type="entry name" value="Ribosomal_uS13-like_H2TH"/>
</dbReference>
<dbReference type="InterPro" id="IPR019980">
    <property type="entry name" value="Ribosomal_uS13_bac-type"/>
</dbReference>
<dbReference type="InterPro" id="IPR018269">
    <property type="entry name" value="Ribosomal_uS13_CS"/>
</dbReference>
<dbReference type="NCBIfam" id="TIGR03631">
    <property type="entry name" value="uS13_bact"/>
    <property type="match status" value="1"/>
</dbReference>
<dbReference type="PANTHER" id="PTHR10871">
    <property type="entry name" value="30S RIBOSOMAL PROTEIN S13/40S RIBOSOMAL PROTEIN S18"/>
    <property type="match status" value="1"/>
</dbReference>
<dbReference type="PANTHER" id="PTHR10871:SF1">
    <property type="entry name" value="SMALL RIBOSOMAL SUBUNIT PROTEIN US13M"/>
    <property type="match status" value="1"/>
</dbReference>
<dbReference type="Pfam" id="PF00416">
    <property type="entry name" value="Ribosomal_S13"/>
    <property type="match status" value="1"/>
</dbReference>
<dbReference type="PIRSF" id="PIRSF002134">
    <property type="entry name" value="Ribosomal_S13"/>
    <property type="match status" value="1"/>
</dbReference>
<dbReference type="SUPFAM" id="SSF46946">
    <property type="entry name" value="S13-like H2TH domain"/>
    <property type="match status" value="1"/>
</dbReference>
<dbReference type="PROSITE" id="PS00646">
    <property type="entry name" value="RIBOSOMAL_S13_1"/>
    <property type="match status" value="1"/>
</dbReference>
<dbReference type="PROSITE" id="PS50159">
    <property type="entry name" value="RIBOSOMAL_S13_2"/>
    <property type="match status" value="1"/>
</dbReference>
<reference key="1">
    <citation type="journal article" date="1997" name="Biochem. Mol. Biol. Int.">
        <title>The large ribosomal protein gene cluster of a cryptomonad plastid: gene organization, sequence and evolutionary implications.</title>
        <authorList>
            <person name="Wang S.L."/>
            <person name="Liu X.-Q."/>
            <person name="Douglas S.E."/>
        </authorList>
    </citation>
    <scope>NUCLEOTIDE SEQUENCE [GENOMIC DNA]</scope>
</reference>
<reference key="2">
    <citation type="journal article" date="1999" name="J. Mol. Evol.">
        <title>The plastid genome of the cryptophyte alga, Guillardia theta: complete sequence and conserved synteny groups confirm its common ancestry with red algae.</title>
        <authorList>
            <person name="Douglas S.E."/>
            <person name="Penny S.L."/>
        </authorList>
    </citation>
    <scope>NUCLEOTIDE SEQUENCE [LARGE SCALE GENOMIC DNA]</scope>
</reference>
<sequence>MARISGIDLPKNKRIEIALTYIYGVGLSSSQKILEKANIDANKRCKDLDDNEVSLIRSIIDENYPVEGAAKRVESMNIKRLMEINCIRGKRHRVGLPLRGQRTRTNARTRRGAKKTVAGKKK</sequence>